<keyword id="KW-0472">Membrane</keyword>
<keyword id="KW-0496">Mitochondrion</keyword>
<keyword id="KW-0999">Mitochondrion inner membrane</keyword>
<keyword id="KW-1185">Reference proteome</keyword>
<keyword id="KW-0677">Repeat</keyword>
<keyword id="KW-0812">Transmembrane</keyword>
<keyword id="KW-1133">Transmembrane helix</keyword>
<keyword id="KW-0813">Transport</keyword>
<feature type="chain" id="PRO_0000291793" description="Solute carrier family 25 member 35">
    <location>
        <begin position="1"/>
        <end position="249"/>
    </location>
</feature>
<feature type="transmembrane region" description="Helical; Name=1" evidence="3">
    <location>
        <begin position="38"/>
        <end position="58"/>
    </location>
</feature>
<feature type="transmembrane region" description="Helical; Name=2" evidence="3">
    <location>
        <begin position="59"/>
        <end position="79"/>
    </location>
</feature>
<feature type="transmembrane region" description="Helical; Name=3" evidence="3">
    <location>
        <begin position="154"/>
        <end position="174"/>
    </location>
</feature>
<feature type="transmembrane region" description="Helical; Name=4" evidence="3">
    <location>
        <begin position="226"/>
        <end position="249"/>
    </location>
</feature>
<feature type="repeat" description="Solcar 1">
    <location>
        <begin position="1"/>
        <end position="90"/>
    </location>
</feature>
<feature type="repeat" description="Solcar 2">
    <location>
        <begin position="152"/>
        <end position="243"/>
    </location>
</feature>
<comment type="function">
    <text evidence="2">Putative antiporter that exchanges dicarboxylates and sulfur oxoanions across the inner membrane of mitochondria.</text>
</comment>
<comment type="catalytic activity">
    <reaction evidence="2">
        <text>a dicarboxylate(in) + sulfate(out) = a dicarboxylate(out) + sulfate(in)</text>
        <dbReference type="Rhea" id="RHEA:76595"/>
        <dbReference type="ChEBI" id="CHEBI:16189"/>
        <dbReference type="ChEBI" id="CHEBI:28965"/>
    </reaction>
</comment>
<comment type="subcellular location">
    <subcellularLocation>
        <location evidence="1">Mitochondrion inner membrane</location>
        <topology evidence="1">Multi-pass membrane protein</topology>
    </subcellularLocation>
</comment>
<comment type="similarity">
    <text evidence="4">Belongs to the mitochondrial carrier (TC 2.A.29) family.</text>
</comment>
<organism>
    <name type="scientific">Bos taurus</name>
    <name type="common">Bovine</name>
    <dbReference type="NCBI Taxonomy" id="9913"/>
    <lineage>
        <taxon>Eukaryota</taxon>
        <taxon>Metazoa</taxon>
        <taxon>Chordata</taxon>
        <taxon>Craniata</taxon>
        <taxon>Vertebrata</taxon>
        <taxon>Euteleostomi</taxon>
        <taxon>Mammalia</taxon>
        <taxon>Eutheria</taxon>
        <taxon>Laurasiatheria</taxon>
        <taxon>Artiodactyla</taxon>
        <taxon>Ruminantia</taxon>
        <taxon>Pecora</taxon>
        <taxon>Bovidae</taxon>
        <taxon>Bovinae</taxon>
        <taxon>Bos</taxon>
    </lineage>
</organism>
<gene>
    <name type="primary">SLC25A35</name>
</gene>
<protein>
    <recommendedName>
        <fullName>Solute carrier family 25 member 35</fullName>
    </recommendedName>
</protein>
<dbReference type="EMBL" id="BT021524">
    <property type="protein sequence ID" value="AAX46371.1"/>
    <property type="molecule type" value="mRNA"/>
</dbReference>
<dbReference type="RefSeq" id="NP_001026933.1">
    <property type="nucleotide sequence ID" value="NM_001031763.1"/>
</dbReference>
<dbReference type="SMR" id="Q58DS3"/>
<dbReference type="FunCoup" id="Q58DS3">
    <property type="interactions" value="77"/>
</dbReference>
<dbReference type="STRING" id="9913.ENSBTAP00000025036"/>
<dbReference type="GeneID" id="527669"/>
<dbReference type="KEGG" id="bta:527669"/>
<dbReference type="CTD" id="399512"/>
<dbReference type="VEuPathDB" id="HostDB:ENSBTAG00000018808"/>
<dbReference type="HOGENOM" id="CLU_015166_14_3_1"/>
<dbReference type="InParanoid" id="Q58DS3"/>
<dbReference type="OrthoDB" id="6703404at2759"/>
<dbReference type="Proteomes" id="UP000009136">
    <property type="component" value="Chromosome 19"/>
</dbReference>
<dbReference type="Bgee" id="ENSBTAG00000018808">
    <property type="expression patterns" value="Expressed in retina and 100 other cell types or tissues"/>
</dbReference>
<dbReference type="GO" id="GO:0005743">
    <property type="term" value="C:mitochondrial inner membrane"/>
    <property type="evidence" value="ECO:0007669"/>
    <property type="project" value="UniProtKB-SubCell"/>
</dbReference>
<dbReference type="Gene3D" id="1.50.40.10">
    <property type="entry name" value="Mitochondrial carrier domain"/>
    <property type="match status" value="2"/>
</dbReference>
<dbReference type="InterPro" id="IPR051508">
    <property type="entry name" value="Mito_Carrier_Antiporter"/>
</dbReference>
<dbReference type="InterPro" id="IPR018108">
    <property type="entry name" value="Mitochondrial_sb/sol_carrier"/>
</dbReference>
<dbReference type="InterPro" id="IPR023395">
    <property type="entry name" value="Mt_carrier_dom_sf"/>
</dbReference>
<dbReference type="PANTHER" id="PTHR45928">
    <property type="entry name" value="RE38146P"/>
    <property type="match status" value="1"/>
</dbReference>
<dbReference type="PANTHER" id="PTHR45928:SF2">
    <property type="entry name" value="SOLUTE CARRIER FAMILY 25 MEMBER 35"/>
    <property type="match status" value="1"/>
</dbReference>
<dbReference type="Pfam" id="PF00153">
    <property type="entry name" value="Mito_carr"/>
    <property type="match status" value="3"/>
</dbReference>
<dbReference type="SUPFAM" id="SSF103506">
    <property type="entry name" value="Mitochondrial carrier"/>
    <property type="match status" value="1"/>
</dbReference>
<dbReference type="PROSITE" id="PS50920">
    <property type="entry name" value="SOLCAR"/>
    <property type="match status" value="2"/>
</dbReference>
<proteinExistence type="evidence at transcript level"/>
<evidence type="ECO:0000250" key="1"/>
<evidence type="ECO:0000250" key="2">
    <source>
        <dbReference type="UniProtKB" id="Q3KQZ1"/>
    </source>
</evidence>
<evidence type="ECO:0000255" key="3"/>
<evidence type="ECO:0000305" key="4"/>
<accession>Q58DS3</accession>
<reference key="1">
    <citation type="journal article" date="2005" name="BMC Genomics">
        <title>Characterization of 954 bovine full-CDS cDNA sequences.</title>
        <authorList>
            <person name="Harhay G.P."/>
            <person name="Sonstegard T.S."/>
            <person name="Keele J.W."/>
            <person name="Heaton M.P."/>
            <person name="Clawson M.L."/>
            <person name="Snelling W.M."/>
            <person name="Wiedmann R.T."/>
            <person name="Van Tassell C.P."/>
            <person name="Smith T.P.L."/>
        </authorList>
    </citation>
    <scope>NUCLEOTIDE SEQUENCE [LARGE SCALE MRNA]</scope>
</reference>
<sequence>MDFLMSGLAACGACLFTNPLEVVKTRMQLQGELRAPGTYQRHYRNVFHAFITIGKVDGLAALQRGLAPALLYQFLMNGIRLGTYGLAEAGGYLHTAEGTLNPVRSAAAGALAGVMGAYLGSPIYMVKTHLQAQAATEIAVGHQYNHQIFPPQSWKVALAAAMVSGIAVVLAMTPFDVVSTRLYNQPTDAQGKGLMYRGLLDALLQTARTEGIFGMYKGIGASYFRLGPHTILSLFFWDQLRMVYYTYTK</sequence>
<name>S2535_BOVIN</name>